<dbReference type="EC" id="1.3.3.3" evidence="1"/>
<dbReference type="EMBL" id="CP000284">
    <property type="protein sequence ID" value="ABE48617.1"/>
    <property type="molecule type" value="Genomic_DNA"/>
</dbReference>
<dbReference type="RefSeq" id="WP_011478714.1">
    <property type="nucleotide sequence ID" value="NC_007947.1"/>
</dbReference>
<dbReference type="SMR" id="Q1H4H0"/>
<dbReference type="STRING" id="265072.Mfla_0346"/>
<dbReference type="KEGG" id="mfa:Mfla_0346"/>
<dbReference type="eggNOG" id="COG0408">
    <property type="taxonomic scope" value="Bacteria"/>
</dbReference>
<dbReference type="HOGENOM" id="CLU_026169_0_1_4"/>
<dbReference type="OrthoDB" id="9777553at2"/>
<dbReference type="UniPathway" id="UPA00251">
    <property type="reaction ID" value="UER00322"/>
</dbReference>
<dbReference type="Proteomes" id="UP000002440">
    <property type="component" value="Chromosome"/>
</dbReference>
<dbReference type="GO" id="GO:0005737">
    <property type="term" value="C:cytoplasm"/>
    <property type="evidence" value="ECO:0007669"/>
    <property type="project" value="UniProtKB-SubCell"/>
</dbReference>
<dbReference type="GO" id="GO:0004109">
    <property type="term" value="F:coproporphyrinogen oxidase activity"/>
    <property type="evidence" value="ECO:0007669"/>
    <property type="project" value="UniProtKB-UniRule"/>
</dbReference>
<dbReference type="GO" id="GO:0046872">
    <property type="term" value="F:metal ion binding"/>
    <property type="evidence" value="ECO:0007669"/>
    <property type="project" value="UniProtKB-KW"/>
</dbReference>
<dbReference type="GO" id="GO:0042803">
    <property type="term" value="F:protein homodimerization activity"/>
    <property type="evidence" value="ECO:0000250"/>
    <property type="project" value="UniProtKB"/>
</dbReference>
<dbReference type="GO" id="GO:0006782">
    <property type="term" value="P:protoporphyrinogen IX biosynthetic process"/>
    <property type="evidence" value="ECO:0007669"/>
    <property type="project" value="UniProtKB-UniRule"/>
</dbReference>
<dbReference type="FunFam" id="3.40.1500.10:FF:000001">
    <property type="entry name" value="Oxygen-dependent coproporphyrinogen-III oxidase"/>
    <property type="match status" value="1"/>
</dbReference>
<dbReference type="Gene3D" id="3.40.1500.10">
    <property type="entry name" value="Coproporphyrinogen III oxidase, aerobic"/>
    <property type="match status" value="1"/>
</dbReference>
<dbReference type="HAMAP" id="MF_00333">
    <property type="entry name" value="Coprogen_oxidas"/>
    <property type="match status" value="1"/>
</dbReference>
<dbReference type="InterPro" id="IPR001260">
    <property type="entry name" value="Coprogen_oxidase_aer"/>
</dbReference>
<dbReference type="InterPro" id="IPR036406">
    <property type="entry name" value="Coprogen_oxidase_aer_sf"/>
</dbReference>
<dbReference type="NCBIfam" id="NF003727">
    <property type="entry name" value="PRK05330.1"/>
    <property type="match status" value="1"/>
</dbReference>
<dbReference type="PANTHER" id="PTHR10755">
    <property type="entry name" value="COPROPORPHYRINOGEN III OXIDASE, MITOCHONDRIAL"/>
    <property type="match status" value="1"/>
</dbReference>
<dbReference type="PANTHER" id="PTHR10755:SF0">
    <property type="entry name" value="OXYGEN-DEPENDENT COPROPORPHYRINOGEN-III OXIDASE, MITOCHONDRIAL"/>
    <property type="match status" value="1"/>
</dbReference>
<dbReference type="Pfam" id="PF01218">
    <property type="entry name" value="Coprogen_oxidas"/>
    <property type="match status" value="1"/>
</dbReference>
<dbReference type="PIRSF" id="PIRSF000166">
    <property type="entry name" value="Coproporphyri_ox"/>
    <property type="match status" value="1"/>
</dbReference>
<dbReference type="PRINTS" id="PR00073">
    <property type="entry name" value="COPRGNOXDASE"/>
</dbReference>
<dbReference type="SUPFAM" id="SSF102886">
    <property type="entry name" value="Coproporphyrinogen III oxidase"/>
    <property type="match status" value="1"/>
</dbReference>
<name>HEM6_METFK</name>
<proteinExistence type="inferred from homology"/>
<feature type="chain" id="PRO_1000119807" description="Oxygen-dependent coproporphyrinogen-III oxidase">
    <location>
        <begin position="1"/>
        <end position="302"/>
    </location>
</feature>
<feature type="region of interest" description="Important for dimerization" evidence="1">
    <location>
        <begin position="238"/>
        <end position="273"/>
    </location>
</feature>
<feature type="active site" description="Proton donor" evidence="1">
    <location>
        <position position="104"/>
    </location>
</feature>
<feature type="binding site" evidence="1">
    <location>
        <position position="90"/>
    </location>
    <ligand>
        <name>substrate</name>
    </ligand>
</feature>
<feature type="binding site" evidence="1">
    <location>
        <position position="94"/>
    </location>
    <ligand>
        <name>a divalent metal cation</name>
        <dbReference type="ChEBI" id="CHEBI:60240"/>
    </ligand>
</feature>
<feature type="binding site" evidence="1">
    <location>
        <position position="104"/>
    </location>
    <ligand>
        <name>a divalent metal cation</name>
        <dbReference type="ChEBI" id="CHEBI:60240"/>
    </ligand>
</feature>
<feature type="binding site" evidence="1">
    <location>
        <begin position="106"/>
        <end position="108"/>
    </location>
    <ligand>
        <name>substrate</name>
    </ligand>
</feature>
<feature type="binding site" evidence="1">
    <location>
        <position position="143"/>
    </location>
    <ligand>
        <name>a divalent metal cation</name>
        <dbReference type="ChEBI" id="CHEBI:60240"/>
    </ligand>
</feature>
<feature type="binding site" evidence="1">
    <location>
        <position position="173"/>
    </location>
    <ligand>
        <name>a divalent metal cation</name>
        <dbReference type="ChEBI" id="CHEBI:60240"/>
    </ligand>
</feature>
<feature type="site" description="Important for dimerization" evidence="1">
    <location>
        <position position="173"/>
    </location>
</feature>
<protein>
    <recommendedName>
        <fullName evidence="1">Oxygen-dependent coproporphyrinogen-III oxidase</fullName>
        <shortName evidence="1">CPO</shortName>
        <shortName evidence="1">Coprogen oxidase</shortName>
        <shortName evidence="1">Coproporphyrinogenase</shortName>
        <ecNumber evidence="1">1.3.3.3</ecNumber>
    </recommendedName>
</protein>
<reference key="1">
    <citation type="submission" date="2006-03" db="EMBL/GenBank/DDBJ databases">
        <title>Complete sequence of Methylobacillus flagellatus KT.</title>
        <authorList>
            <consortium name="US DOE Joint Genome Institute"/>
            <person name="Copeland A."/>
            <person name="Lucas S."/>
            <person name="Lapidus A."/>
            <person name="Barry K."/>
            <person name="Detter J.C."/>
            <person name="Glavina del Rio T."/>
            <person name="Hammon N."/>
            <person name="Israni S."/>
            <person name="Dalin E."/>
            <person name="Tice H."/>
            <person name="Pitluck S."/>
            <person name="Brettin T."/>
            <person name="Bruce D."/>
            <person name="Han C."/>
            <person name="Tapia R."/>
            <person name="Saunders E."/>
            <person name="Gilna P."/>
            <person name="Schmutz J."/>
            <person name="Larimer F."/>
            <person name="Land M."/>
            <person name="Kyrpides N."/>
            <person name="Anderson I."/>
            <person name="Richardson P."/>
        </authorList>
    </citation>
    <scope>NUCLEOTIDE SEQUENCE [LARGE SCALE GENOMIC DNA]</scope>
    <source>
        <strain>ATCC 51484 / DSM 6875 / VKM B-1610 / KT</strain>
    </source>
</reference>
<evidence type="ECO:0000255" key="1">
    <source>
        <dbReference type="HAMAP-Rule" id="MF_00333"/>
    </source>
</evidence>
<organism>
    <name type="scientific">Methylobacillus flagellatus (strain ATCC 51484 / DSM 6875 / VKM B-1610 / KT)</name>
    <dbReference type="NCBI Taxonomy" id="265072"/>
    <lineage>
        <taxon>Bacteria</taxon>
        <taxon>Pseudomonadati</taxon>
        <taxon>Pseudomonadota</taxon>
        <taxon>Betaproteobacteria</taxon>
        <taxon>Nitrosomonadales</taxon>
        <taxon>Methylophilaceae</taxon>
        <taxon>Methylobacillus</taxon>
    </lineage>
</organism>
<comment type="function">
    <text evidence="1">Involved in the heme biosynthesis. Catalyzes the aerobic oxidative decarboxylation of propionate groups of rings A and B of coproporphyrinogen-III to yield the vinyl groups in protoporphyrinogen-IX.</text>
</comment>
<comment type="catalytic activity">
    <reaction evidence="1">
        <text>coproporphyrinogen III + O2 + 2 H(+) = protoporphyrinogen IX + 2 CO2 + 2 H2O</text>
        <dbReference type="Rhea" id="RHEA:18257"/>
        <dbReference type="ChEBI" id="CHEBI:15377"/>
        <dbReference type="ChEBI" id="CHEBI:15378"/>
        <dbReference type="ChEBI" id="CHEBI:15379"/>
        <dbReference type="ChEBI" id="CHEBI:16526"/>
        <dbReference type="ChEBI" id="CHEBI:57307"/>
        <dbReference type="ChEBI" id="CHEBI:57309"/>
        <dbReference type="EC" id="1.3.3.3"/>
    </reaction>
</comment>
<comment type="cofactor">
    <cofactor evidence="1">
        <name>a divalent metal cation</name>
        <dbReference type="ChEBI" id="CHEBI:60240"/>
    </cofactor>
</comment>
<comment type="pathway">
    <text evidence="1">Porphyrin-containing compound metabolism; protoporphyrin-IX biosynthesis; protoporphyrinogen-IX from coproporphyrinogen-III (O2 route): step 1/1.</text>
</comment>
<comment type="subunit">
    <text evidence="1">Homodimer.</text>
</comment>
<comment type="subcellular location">
    <subcellularLocation>
        <location evidence="1">Cytoplasm</location>
    </subcellularLocation>
</comment>
<comment type="similarity">
    <text evidence="1">Belongs to the aerobic coproporphyrinogen-III oxidase family.</text>
</comment>
<keyword id="KW-0963">Cytoplasm</keyword>
<keyword id="KW-0350">Heme biosynthesis</keyword>
<keyword id="KW-0479">Metal-binding</keyword>
<keyword id="KW-0560">Oxidoreductase</keyword>
<keyword id="KW-0627">Porphyrin biosynthesis</keyword>
<keyword id="KW-1185">Reference proteome</keyword>
<gene>
    <name evidence="1" type="primary">hemF</name>
    <name type="ordered locus">Mfla_0346</name>
</gene>
<sequence length="302" mass="34871">MNPTAIFDYLQGLQTRIVEAIELVDGKRFLHDSWQRAEGGGGTSCMLEEGNVFERAGIGFSHVIGNKLPPSASVAHPEAAGRSWQAMGVSLVFHPRNPYVPTVHMNVRFFVAEKPGEEPIWWFGGGMDLTPYYGFEEDAVHFHRTCRDAVAPFGEQYYPRFKKECDDYFYLKHRKEARGIGGIFFDDFNELGFEQSFAFQRSVGDAFINAYLPIVQRRKDIPYSERERDFQAYRRGRYVEFNLIYDRGTIFGLQSNGRTESILLSMPPIVKWRYDWKPEAGSPEARLYSDFITGRDWLTEHK</sequence>
<accession>Q1H4H0</accession>